<keyword id="KW-0687">Ribonucleoprotein</keyword>
<keyword id="KW-0689">Ribosomal protein</keyword>
<protein>
    <recommendedName>
        <fullName evidence="1">Large ribosomal subunit protein bL19</fullName>
    </recommendedName>
    <alternativeName>
        <fullName evidence="2">50S ribosomal protein L19</fullName>
    </alternativeName>
</protein>
<name>RL19_XYLFM</name>
<sequence length="136" mass="15051">MSKLNKSIIAEFESAQITRQVPQFSQGDTIVVNVKVKEGNRERLQAYEGVVIATKNAGLNSAFTVRKISHGYGVERVFQTHSPIIESIEIKRRGKVRAAKLYYLRGLEGKAARIKEDLAATAHEKLARKTVTAKAG</sequence>
<feature type="chain" id="PRO_1000193923" description="Large ribosomal subunit protein bL19">
    <location>
        <begin position="1"/>
        <end position="136"/>
    </location>
</feature>
<proteinExistence type="inferred from homology"/>
<comment type="function">
    <text evidence="1">This protein is located at the 30S-50S ribosomal subunit interface and may play a role in the structure and function of the aminoacyl-tRNA binding site.</text>
</comment>
<comment type="similarity">
    <text evidence="1">Belongs to the bacterial ribosomal protein bL19 family.</text>
</comment>
<reference key="1">
    <citation type="journal article" date="2010" name="J. Bacteriol.">
        <title>Whole genome sequences of two Xylella fastidiosa strains (M12 and M23) causing almond leaf scorch disease in California.</title>
        <authorList>
            <person name="Chen J."/>
            <person name="Xie G."/>
            <person name="Han S."/>
            <person name="Chertkov O."/>
            <person name="Sims D."/>
            <person name="Civerolo E.L."/>
        </authorList>
    </citation>
    <scope>NUCLEOTIDE SEQUENCE [LARGE SCALE GENOMIC DNA]</scope>
    <source>
        <strain>M12</strain>
    </source>
</reference>
<organism>
    <name type="scientific">Xylella fastidiosa (strain M12)</name>
    <dbReference type="NCBI Taxonomy" id="405440"/>
    <lineage>
        <taxon>Bacteria</taxon>
        <taxon>Pseudomonadati</taxon>
        <taxon>Pseudomonadota</taxon>
        <taxon>Gammaproteobacteria</taxon>
        <taxon>Lysobacterales</taxon>
        <taxon>Lysobacteraceae</taxon>
        <taxon>Xylella</taxon>
    </lineage>
</organism>
<dbReference type="EMBL" id="CP000941">
    <property type="protein sequence ID" value="ACA11130.1"/>
    <property type="molecule type" value="Genomic_DNA"/>
</dbReference>
<dbReference type="RefSeq" id="WP_004085540.1">
    <property type="nucleotide sequence ID" value="NC_010513.1"/>
</dbReference>
<dbReference type="SMR" id="B0U291"/>
<dbReference type="GeneID" id="93903775"/>
<dbReference type="KEGG" id="xfm:Xfasm12_0090"/>
<dbReference type="HOGENOM" id="CLU_103507_2_1_6"/>
<dbReference type="GO" id="GO:0022625">
    <property type="term" value="C:cytosolic large ribosomal subunit"/>
    <property type="evidence" value="ECO:0007669"/>
    <property type="project" value="TreeGrafter"/>
</dbReference>
<dbReference type="GO" id="GO:0003735">
    <property type="term" value="F:structural constituent of ribosome"/>
    <property type="evidence" value="ECO:0007669"/>
    <property type="project" value="InterPro"/>
</dbReference>
<dbReference type="GO" id="GO:0006412">
    <property type="term" value="P:translation"/>
    <property type="evidence" value="ECO:0007669"/>
    <property type="project" value="UniProtKB-UniRule"/>
</dbReference>
<dbReference type="FunFam" id="2.30.30.790:FF:000001">
    <property type="entry name" value="50S ribosomal protein L19"/>
    <property type="match status" value="1"/>
</dbReference>
<dbReference type="Gene3D" id="2.30.30.790">
    <property type="match status" value="1"/>
</dbReference>
<dbReference type="HAMAP" id="MF_00402">
    <property type="entry name" value="Ribosomal_bL19"/>
    <property type="match status" value="1"/>
</dbReference>
<dbReference type="InterPro" id="IPR001857">
    <property type="entry name" value="Ribosomal_bL19"/>
</dbReference>
<dbReference type="InterPro" id="IPR018257">
    <property type="entry name" value="Ribosomal_bL19_CS"/>
</dbReference>
<dbReference type="InterPro" id="IPR038657">
    <property type="entry name" value="Ribosomal_bL19_sf"/>
</dbReference>
<dbReference type="InterPro" id="IPR008991">
    <property type="entry name" value="Translation_prot_SH3-like_sf"/>
</dbReference>
<dbReference type="NCBIfam" id="TIGR01024">
    <property type="entry name" value="rplS_bact"/>
    <property type="match status" value="1"/>
</dbReference>
<dbReference type="PANTHER" id="PTHR15680:SF9">
    <property type="entry name" value="LARGE RIBOSOMAL SUBUNIT PROTEIN BL19M"/>
    <property type="match status" value="1"/>
</dbReference>
<dbReference type="PANTHER" id="PTHR15680">
    <property type="entry name" value="RIBOSOMAL PROTEIN L19"/>
    <property type="match status" value="1"/>
</dbReference>
<dbReference type="Pfam" id="PF01245">
    <property type="entry name" value="Ribosomal_L19"/>
    <property type="match status" value="1"/>
</dbReference>
<dbReference type="PIRSF" id="PIRSF002191">
    <property type="entry name" value="Ribosomal_L19"/>
    <property type="match status" value="1"/>
</dbReference>
<dbReference type="PRINTS" id="PR00061">
    <property type="entry name" value="RIBOSOMALL19"/>
</dbReference>
<dbReference type="SUPFAM" id="SSF50104">
    <property type="entry name" value="Translation proteins SH3-like domain"/>
    <property type="match status" value="1"/>
</dbReference>
<dbReference type="PROSITE" id="PS01015">
    <property type="entry name" value="RIBOSOMAL_L19"/>
    <property type="match status" value="1"/>
</dbReference>
<evidence type="ECO:0000255" key="1">
    <source>
        <dbReference type="HAMAP-Rule" id="MF_00402"/>
    </source>
</evidence>
<evidence type="ECO:0000305" key="2"/>
<accession>B0U291</accession>
<gene>
    <name evidence="1" type="primary">rplS</name>
    <name type="ordered locus">Xfasm12_0090</name>
</gene>